<protein>
    <recommendedName>
        <fullName evidence="1">Large ribosomal subunit protein uL5</fullName>
    </recommendedName>
    <alternativeName>
        <fullName evidence="2">50S ribosomal protein L5</fullName>
    </alternativeName>
</protein>
<evidence type="ECO:0000255" key="1">
    <source>
        <dbReference type="HAMAP-Rule" id="MF_01333"/>
    </source>
</evidence>
<evidence type="ECO:0000305" key="2"/>
<name>RL5_STRZP</name>
<dbReference type="EMBL" id="CP000920">
    <property type="protein sequence ID" value="ACO20800.1"/>
    <property type="molecule type" value="Genomic_DNA"/>
</dbReference>
<dbReference type="RefSeq" id="WP_000013542.1">
    <property type="nucleotide sequence ID" value="NC_012467.1"/>
</dbReference>
<dbReference type="SMR" id="C1CIA9"/>
<dbReference type="GeneID" id="93738969"/>
<dbReference type="KEGG" id="spp:SPP_0272"/>
<dbReference type="HOGENOM" id="CLU_061015_2_1_9"/>
<dbReference type="GO" id="GO:1990904">
    <property type="term" value="C:ribonucleoprotein complex"/>
    <property type="evidence" value="ECO:0007669"/>
    <property type="project" value="UniProtKB-KW"/>
</dbReference>
<dbReference type="GO" id="GO:0005840">
    <property type="term" value="C:ribosome"/>
    <property type="evidence" value="ECO:0007669"/>
    <property type="project" value="UniProtKB-KW"/>
</dbReference>
<dbReference type="GO" id="GO:0019843">
    <property type="term" value="F:rRNA binding"/>
    <property type="evidence" value="ECO:0007669"/>
    <property type="project" value="UniProtKB-UniRule"/>
</dbReference>
<dbReference type="GO" id="GO:0003735">
    <property type="term" value="F:structural constituent of ribosome"/>
    <property type="evidence" value="ECO:0007669"/>
    <property type="project" value="InterPro"/>
</dbReference>
<dbReference type="GO" id="GO:0000049">
    <property type="term" value="F:tRNA binding"/>
    <property type="evidence" value="ECO:0007669"/>
    <property type="project" value="UniProtKB-UniRule"/>
</dbReference>
<dbReference type="GO" id="GO:0006412">
    <property type="term" value="P:translation"/>
    <property type="evidence" value="ECO:0007669"/>
    <property type="project" value="UniProtKB-UniRule"/>
</dbReference>
<dbReference type="FunFam" id="3.30.1440.10:FF:000001">
    <property type="entry name" value="50S ribosomal protein L5"/>
    <property type="match status" value="1"/>
</dbReference>
<dbReference type="Gene3D" id="3.30.1440.10">
    <property type="match status" value="1"/>
</dbReference>
<dbReference type="HAMAP" id="MF_01333_B">
    <property type="entry name" value="Ribosomal_uL5_B"/>
    <property type="match status" value="1"/>
</dbReference>
<dbReference type="InterPro" id="IPR002132">
    <property type="entry name" value="Ribosomal_uL5"/>
</dbReference>
<dbReference type="InterPro" id="IPR020930">
    <property type="entry name" value="Ribosomal_uL5_bac-type"/>
</dbReference>
<dbReference type="InterPro" id="IPR031309">
    <property type="entry name" value="Ribosomal_uL5_C"/>
</dbReference>
<dbReference type="InterPro" id="IPR020929">
    <property type="entry name" value="Ribosomal_uL5_CS"/>
</dbReference>
<dbReference type="InterPro" id="IPR022803">
    <property type="entry name" value="Ribosomal_uL5_dom_sf"/>
</dbReference>
<dbReference type="InterPro" id="IPR031310">
    <property type="entry name" value="Ribosomal_uL5_N"/>
</dbReference>
<dbReference type="NCBIfam" id="NF000585">
    <property type="entry name" value="PRK00010.1"/>
    <property type="match status" value="1"/>
</dbReference>
<dbReference type="PANTHER" id="PTHR11994">
    <property type="entry name" value="60S RIBOSOMAL PROTEIN L11-RELATED"/>
    <property type="match status" value="1"/>
</dbReference>
<dbReference type="Pfam" id="PF00281">
    <property type="entry name" value="Ribosomal_L5"/>
    <property type="match status" value="1"/>
</dbReference>
<dbReference type="Pfam" id="PF00673">
    <property type="entry name" value="Ribosomal_L5_C"/>
    <property type="match status" value="1"/>
</dbReference>
<dbReference type="PIRSF" id="PIRSF002161">
    <property type="entry name" value="Ribosomal_L5"/>
    <property type="match status" value="1"/>
</dbReference>
<dbReference type="SUPFAM" id="SSF55282">
    <property type="entry name" value="RL5-like"/>
    <property type="match status" value="1"/>
</dbReference>
<dbReference type="PROSITE" id="PS00358">
    <property type="entry name" value="RIBOSOMAL_L5"/>
    <property type="match status" value="1"/>
</dbReference>
<sequence length="180" mass="19774">MANRLKEKYLNEVVPALTEQFNYSSVMAVPKVDKIVLNMGVGEAVSNAKSLEKAAEELALISGQKPLITKAKKSIAGFRLREGVAIGAKVTLRGERMYEFLDKLVSVSLPRVRDFHGVPTKSFDGRGNYTLGVKEQLIFPEINFDDVDKTRGLDIVIVTTANTDEESRALLTGLGMPFAK</sequence>
<comment type="function">
    <text evidence="1">This is one of the proteins that bind and probably mediate the attachment of the 5S RNA into the large ribosomal subunit, where it forms part of the central protuberance. In the 70S ribosome it contacts protein S13 of the 30S subunit (bridge B1b), connecting the 2 subunits; this bridge is implicated in subunit movement. Contacts the P site tRNA; the 5S rRNA and some of its associated proteins might help stabilize positioning of ribosome-bound tRNAs.</text>
</comment>
<comment type="subunit">
    <text evidence="1">Part of the 50S ribosomal subunit; part of the 5S rRNA/L5/L18/L25 subcomplex. Contacts the 5S rRNA and the P site tRNA. Forms a bridge to the 30S subunit in the 70S ribosome.</text>
</comment>
<comment type="similarity">
    <text evidence="1">Belongs to the universal ribosomal protein uL5 family.</text>
</comment>
<keyword id="KW-0687">Ribonucleoprotein</keyword>
<keyword id="KW-0689">Ribosomal protein</keyword>
<keyword id="KW-0694">RNA-binding</keyword>
<keyword id="KW-0699">rRNA-binding</keyword>
<keyword id="KW-0820">tRNA-binding</keyword>
<proteinExistence type="inferred from homology"/>
<reference key="1">
    <citation type="journal article" date="2010" name="Genome Biol.">
        <title>Structure and dynamics of the pan-genome of Streptococcus pneumoniae and closely related species.</title>
        <authorList>
            <person name="Donati C."/>
            <person name="Hiller N.L."/>
            <person name="Tettelin H."/>
            <person name="Muzzi A."/>
            <person name="Croucher N.J."/>
            <person name="Angiuoli S.V."/>
            <person name="Oggioni M."/>
            <person name="Dunning Hotopp J.C."/>
            <person name="Hu F.Z."/>
            <person name="Riley D.R."/>
            <person name="Covacci A."/>
            <person name="Mitchell T.J."/>
            <person name="Bentley S.D."/>
            <person name="Kilian M."/>
            <person name="Ehrlich G.D."/>
            <person name="Rappuoli R."/>
            <person name="Moxon E.R."/>
            <person name="Masignani V."/>
        </authorList>
    </citation>
    <scope>NUCLEOTIDE SEQUENCE [LARGE SCALE GENOMIC DNA]</scope>
    <source>
        <strain>P1031</strain>
    </source>
</reference>
<accession>C1CIA9</accession>
<gene>
    <name evidence="1" type="primary">rplE</name>
    <name type="ordered locus">SPP_0272</name>
</gene>
<feature type="chain" id="PRO_1000166154" description="Large ribosomal subunit protein uL5">
    <location>
        <begin position="1"/>
        <end position="180"/>
    </location>
</feature>
<organism>
    <name type="scientific">Streptococcus pneumoniae (strain P1031)</name>
    <dbReference type="NCBI Taxonomy" id="488223"/>
    <lineage>
        <taxon>Bacteria</taxon>
        <taxon>Bacillati</taxon>
        <taxon>Bacillota</taxon>
        <taxon>Bacilli</taxon>
        <taxon>Lactobacillales</taxon>
        <taxon>Streptococcaceae</taxon>
        <taxon>Streptococcus</taxon>
    </lineage>
</organism>